<comment type="function">
    <text evidence="1">This enzyme is required for electron transfer from NADP to cytochrome P450 in microsomes. It can also provide electron transfer to heme oxygenase and cytochrome B5.</text>
</comment>
<comment type="catalytic activity">
    <reaction evidence="1">
        <text>2 oxidized [cytochrome P450] + NADPH = 2 reduced [cytochrome P450] + NADP(+) + H(+)</text>
        <dbReference type="Rhea" id="RHEA:24040"/>
        <dbReference type="Rhea" id="RHEA-COMP:14627"/>
        <dbReference type="Rhea" id="RHEA-COMP:14628"/>
        <dbReference type="ChEBI" id="CHEBI:15378"/>
        <dbReference type="ChEBI" id="CHEBI:55376"/>
        <dbReference type="ChEBI" id="CHEBI:57783"/>
        <dbReference type="ChEBI" id="CHEBI:58349"/>
        <dbReference type="ChEBI" id="CHEBI:60344"/>
        <dbReference type="EC" id="1.6.2.4"/>
    </reaction>
</comment>
<comment type="cofactor">
    <cofactor evidence="1 10">
        <name>FAD</name>
        <dbReference type="ChEBI" id="CHEBI:57692"/>
    </cofactor>
    <text evidence="1 10">Binds 1 FAD per monomer.</text>
</comment>
<comment type="cofactor">
    <cofactor evidence="1 10">
        <name>FMN</name>
        <dbReference type="ChEBI" id="CHEBI:58210"/>
    </cofactor>
    <text evidence="1 10">Binds 1 FMN per monomer.</text>
</comment>
<comment type="interaction">
    <interactant intactId="EBI-726554">
        <id>P16435</id>
    </interactant>
    <interactant intactId="EBI-1045534">
        <id>O00264</id>
        <label>PGRMC1</label>
    </interactant>
    <organismsDiffer>false</organismsDiffer>
    <experiments>6</experiments>
</comment>
<comment type="interaction">
    <interactant intactId="EBI-726554">
        <id>P16435</id>
    </interactant>
    <interactant intactId="EBI-4320576">
        <id>P00181</id>
        <label>CYP2C2</label>
    </interactant>
    <organismsDiffer>true</organismsDiffer>
    <experiments>4</experiments>
</comment>
<comment type="subcellular location">
    <subcellularLocation>
        <location evidence="1">Endoplasmic reticulum membrane</location>
        <topology evidence="1">Single-pass membrane protein</topology>
        <orientation evidence="1">Cytoplasmic side</orientation>
    </subcellularLocation>
</comment>
<comment type="disease" evidence="3 5 6">
    <disease id="DI-00046">
        <name>Antley-Bixler syndrome, with genital anomalies and disordered steroidogenesis</name>
        <acronym>ABS1</acronym>
        <description>A disease characterized by the association of Antley-Bixler syndrome with steroidogenesis defects and abnormal genitalia. Antley-Bixler syndrome is characterized by craniosynostosis, radiohumeral synostosis present from the perinatal period, midface hypoplasia, choanal stenosis or atresia, femoral bowing and multiple joint contractures.</description>
        <dbReference type="MIM" id="201750"/>
    </disease>
    <text>The disease is caused by variants affecting the gene represented in this entry.</text>
</comment>
<comment type="disease" evidence="3 4">
    <disease id="DI-00601">
        <name>Disordered steroidogenesis due to cytochrome P450 oxidoreductase deficiency</name>
        <acronym>DISPORD</acronym>
        <description>A disorder resulting in a rare variant of congenital adrenal hyperplasia, with apparent combined P450C17 and P450C21 deficiency and accumulation of steroid metabolites. Affected girls are born with ambiguous genitalia, but their circulating androgens are low and virilization does not progress. Conversely, affected boys are sometimes born undermasculinized. Boys and girls can present with bone malformations, in some cases resembling the pattern seen in patients with Antley-Bixler syndrome.</description>
        <dbReference type="MIM" id="613571"/>
    </disease>
    <text>The disease is caused by variants affecting the gene represented in this entry.</text>
</comment>
<comment type="similarity">
    <text evidence="1">Belongs to the NADPH--cytochrome P450 reductase family.</text>
</comment>
<comment type="similarity">
    <text evidence="1">In the N-terminal section; belongs to the flavodoxin family.</text>
</comment>
<comment type="similarity">
    <text evidence="1">In the C-terminal section; belongs to the flavoprotein pyridine nucleotide cytochrome reductase family.</text>
</comment>
<comment type="caution">
    <text evidence="14">An alternative upstream Met is found in primates and translation may initiate from the upstream Met which would give rise to a 680-residue protein. However, the upstream codon has a weak Kozak signal while the codon used for translation of the shorter 677-residue sequence has a strong Kozak signal and is widely conserved. In addition, protein sequencing indicates that this is the preferred start codon in vivo.</text>
</comment>
<comment type="sequence caution" evidence="14">
    <conflict type="erroneous initiation">
        <sequence resource="EMBL-CDS" id="AAH34277"/>
    </conflict>
    <text>Extended N-terminus.</text>
</comment>
<reference key="1">
    <citation type="journal article" date="1992" name="Arch. Biochem. Biophys.">
        <title>Quantification of cytochrome P450 reductase gene expression in human tissues.</title>
        <authorList>
            <person name="Shephard E.A."/>
            <person name="Palmer C.N."/>
            <person name="Segall H.J."/>
            <person name="Phillips I.R."/>
        </authorList>
    </citation>
    <scope>NUCLEOTIDE SEQUENCE [MRNA]</scope>
    <scope>VARIANT VAL-500</scope>
</reference>
<reference key="2">
    <citation type="submission" date="2000-04" db="EMBL/GenBank/DDBJ databases">
        <title>Polymorphism of human CYPOR: expression of new allele.</title>
        <authorList>
            <person name="Czerwinski M."/>
            <person name="Sahni M."/>
            <person name="Madan A."/>
            <person name="Parkinson A."/>
        </authorList>
    </citation>
    <scope>NUCLEOTIDE SEQUENCE [MRNA]</scope>
    <source>
        <tissue>Liver</tissue>
    </source>
</reference>
<reference key="3">
    <citation type="submission" date="2000-11" db="EMBL/GenBank/DDBJ databases">
        <title>cDNA cloning and characterization of NADPH-cytochrome P-450 reductase in human HL-60 cell.</title>
        <authorList>
            <person name="Murakami H.O."/>
            <person name="Ogawa H."/>
            <person name="Nisimoto Y."/>
        </authorList>
    </citation>
    <scope>NUCLEOTIDE SEQUENCE [MRNA]</scope>
</reference>
<reference key="4">
    <citation type="submission" date="2006-05" db="EMBL/GenBank/DDBJ databases">
        <authorList>
            <consortium name="NIEHS SNPs program"/>
        </authorList>
    </citation>
    <scope>NUCLEOTIDE SEQUENCE [GENOMIC DNA]</scope>
    <scope>VARIANTS LEU-225; ASN-252 AND VAL-500</scope>
</reference>
<reference key="5">
    <citation type="journal article" date="2003" name="Nature">
        <title>The DNA sequence of human chromosome 7.</title>
        <authorList>
            <person name="Hillier L.W."/>
            <person name="Fulton R.S."/>
            <person name="Fulton L.A."/>
            <person name="Graves T.A."/>
            <person name="Pepin K.H."/>
            <person name="Wagner-McPherson C."/>
            <person name="Layman D."/>
            <person name="Maas J."/>
            <person name="Jaeger S."/>
            <person name="Walker R."/>
            <person name="Wylie K."/>
            <person name="Sekhon M."/>
            <person name="Becker M.C."/>
            <person name="O'Laughlin M.D."/>
            <person name="Schaller M.E."/>
            <person name="Fewell G.A."/>
            <person name="Delehaunty K.D."/>
            <person name="Miner T.L."/>
            <person name="Nash W.E."/>
            <person name="Cordes M."/>
            <person name="Du H."/>
            <person name="Sun H."/>
            <person name="Edwards J."/>
            <person name="Bradshaw-Cordum H."/>
            <person name="Ali J."/>
            <person name="Andrews S."/>
            <person name="Isak A."/>
            <person name="Vanbrunt A."/>
            <person name="Nguyen C."/>
            <person name="Du F."/>
            <person name="Lamar B."/>
            <person name="Courtney L."/>
            <person name="Kalicki J."/>
            <person name="Ozersky P."/>
            <person name="Bielicki L."/>
            <person name="Scott K."/>
            <person name="Holmes A."/>
            <person name="Harkins R."/>
            <person name="Harris A."/>
            <person name="Strong C.M."/>
            <person name="Hou S."/>
            <person name="Tomlinson C."/>
            <person name="Dauphin-Kohlberg S."/>
            <person name="Kozlowicz-Reilly A."/>
            <person name="Leonard S."/>
            <person name="Rohlfing T."/>
            <person name="Rock S.M."/>
            <person name="Tin-Wollam A.-M."/>
            <person name="Abbott A."/>
            <person name="Minx P."/>
            <person name="Maupin R."/>
            <person name="Strowmatt C."/>
            <person name="Latreille P."/>
            <person name="Miller N."/>
            <person name="Johnson D."/>
            <person name="Murray J."/>
            <person name="Woessner J.P."/>
            <person name="Wendl M.C."/>
            <person name="Yang S.-P."/>
            <person name="Schultz B.R."/>
            <person name="Wallis J.W."/>
            <person name="Spieth J."/>
            <person name="Bieri T.A."/>
            <person name="Nelson J.O."/>
            <person name="Berkowicz N."/>
            <person name="Wohldmann P.E."/>
            <person name="Cook L.L."/>
            <person name="Hickenbotham M.T."/>
            <person name="Eldred J."/>
            <person name="Williams D."/>
            <person name="Bedell J.A."/>
            <person name="Mardis E.R."/>
            <person name="Clifton S.W."/>
            <person name="Chissoe S.L."/>
            <person name="Marra M.A."/>
            <person name="Raymond C."/>
            <person name="Haugen E."/>
            <person name="Gillett W."/>
            <person name="Zhou Y."/>
            <person name="James R."/>
            <person name="Phelps K."/>
            <person name="Iadanoto S."/>
            <person name="Bubb K."/>
            <person name="Simms E."/>
            <person name="Levy R."/>
            <person name="Clendenning J."/>
            <person name="Kaul R."/>
            <person name="Kent W.J."/>
            <person name="Furey T.S."/>
            <person name="Baertsch R.A."/>
            <person name="Brent M.R."/>
            <person name="Keibler E."/>
            <person name="Flicek P."/>
            <person name="Bork P."/>
            <person name="Suyama M."/>
            <person name="Bailey J.A."/>
            <person name="Portnoy M.E."/>
            <person name="Torrents D."/>
            <person name="Chinwalla A.T."/>
            <person name="Gish W.R."/>
            <person name="Eddy S.R."/>
            <person name="McPherson J.D."/>
            <person name="Olson M.V."/>
            <person name="Eichler E.E."/>
            <person name="Green E.D."/>
            <person name="Waterston R.H."/>
            <person name="Wilson R.K."/>
        </authorList>
    </citation>
    <scope>NUCLEOTIDE SEQUENCE [LARGE SCALE GENOMIC DNA]</scope>
</reference>
<reference key="6">
    <citation type="journal article" date="2004" name="Genome Res.">
        <title>The status, quality, and expansion of the NIH full-length cDNA project: the Mammalian Gene Collection (MGC).</title>
        <authorList>
            <consortium name="The MGC Project Team"/>
        </authorList>
    </citation>
    <scope>NUCLEOTIDE SEQUENCE [LARGE SCALE MRNA]</scope>
    <scope>VARIANTS LEU-225 AND VAL-500</scope>
    <source>
        <tissue>Lung</tissue>
    </source>
</reference>
<reference key="7">
    <citation type="journal article" date="1989" name="Biochemistry">
        <title>Structural and functional analysis of NADPH-cytochrome P-450 reductase from human liver: complete sequence of human enzyme and NADPH-binding sites.</title>
        <authorList>
            <person name="Haniu M."/>
            <person name="McManus M.E."/>
            <person name="Birkett D.J."/>
            <person name="Lee T.D."/>
            <person name="Shively J.E."/>
        </authorList>
    </citation>
    <scope>PROTEIN SEQUENCE OF 2-677</scope>
    <scope>CLEAVAGE OF INITIATOR METHIONINE</scope>
    <scope>ACETYLATION AT GLY-2</scope>
    <source>
        <tissue>Liver</tissue>
    </source>
</reference>
<reference key="8">
    <citation type="journal article" date="2011" name="BMC Syst. Biol.">
        <title>Initial characterization of the human central proteome.</title>
        <authorList>
            <person name="Burkard T.R."/>
            <person name="Planyavsky M."/>
            <person name="Kaupe I."/>
            <person name="Breitwieser F.P."/>
            <person name="Buerckstuemmer T."/>
            <person name="Bennett K.L."/>
            <person name="Superti-Furga G."/>
            <person name="Colinge J."/>
        </authorList>
    </citation>
    <scope>IDENTIFICATION BY MASS SPECTROMETRY [LARGE SCALE ANALYSIS]</scope>
</reference>
<reference key="9">
    <citation type="journal article" date="2013" name="J. Proteome Res.">
        <title>Toward a comprehensive characterization of a human cancer cell phosphoproteome.</title>
        <authorList>
            <person name="Zhou H."/>
            <person name="Di Palma S."/>
            <person name="Preisinger C."/>
            <person name="Peng M."/>
            <person name="Polat A.N."/>
            <person name="Heck A.J."/>
            <person name="Mohammed S."/>
        </authorList>
    </citation>
    <scope>PHOSPHORYLATION [LARGE SCALE ANALYSIS] AT SER-63</scope>
    <scope>IDENTIFICATION BY MASS SPECTROMETRY [LARGE SCALE ANALYSIS]</scope>
    <source>
        <tissue>Cervix carcinoma</tissue>
        <tissue>Erythroleukemia</tissue>
    </source>
</reference>
<reference key="10">
    <citation type="journal article" date="2014" name="J. Proteomics">
        <title>An enzyme assisted RP-RPLC approach for in-depth analysis of human liver phosphoproteome.</title>
        <authorList>
            <person name="Bian Y."/>
            <person name="Song C."/>
            <person name="Cheng K."/>
            <person name="Dong M."/>
            <person name="Wang F."/>
            <person name="Huang J."/>
            <person name="Sun D."/>
            <person name="Wang L."/>
            <person name="Ye M."/>
            <person name="Zou H."/>
        </authorList>
    </citation>
    <scope>IDENTIFICATION BY MASS SPECTROMETRY [LARGE SCALE ANALYSIS]</scope>
    <source>
        <tissue>Liver</tissue>
    </source>
</reference>
<reference key="11">
    <citation type="journal article" date="2015" name="Proteomics">
        <title>N-terminome analysis of the human mitochondrial proteome.</title>
        <authorList>
            <person name="Vaca Jacome A.S."/>
            <person name="Rabilloud T."/>
            <person name="Schaeffer-Reiss C."/>
            <person name="Rompais M."/>
            <person name="Ayoub D."/>
            <person name="Lane L."/>
            <person name="Bairoch A."/>
            <person name="Van Dorsselaer A."/>
            <person name="Carapito C."/>
        </authorList>
    </citation>
    <scope>IDENTIFICATION BY MASS SPECTROMETRY [LARGE SCALE ANALYSIS]</scope>
</reference>
<reference key="12">
    <citation type="journal article" date="1999" name="Protein Sci.">
        <title>Crystal structure of the FMN-binding domain of human cytochrome P450 reductase at 1.93 A resolution.</title>
        <authorList>
            <person name="Zhao Q."/>
            <person name="Modi S."/>
            <person name="Smith G."/>
            <person name="Paine M."/>
            <person name="McDonagh P.D."/>
            <person name="Wolf C.R."/>
            <person name="Tew D."/>
            <person name="Lian L.Y."/>
            <person name="Roberts G.C."/>
            <person name="Driessen H.P."/>
        </authorList>
    </citation>
    <scope>X-RAY CRYSTALLOGRAPHY (1.93 ANGSTROMS) OF 61-241 IN COMPLEX WITH FMN</scope>
</reference>
<reference key="13">
    <citation type="journal article" date="2009" name="EMBO Rep.">
        <title>Structure of the open conformation of a functional chimeric NADPH cytochrome P450 reductase.</title>
        <authorList>
            <person name="Aigrain L."/>
            <person name="Pompon D."/>
            <person name="Morera S."/>
            <person name="Truan G."/>
        </authorList>
    </citation>
    <scope>X-RAY CRYSTALLOGRAPHY (2.50 ANGSTROMS) OF 232-677 IN COMPLEX WITH FAD</scope>
</reference>
<reference key="14">
    <citation type="journal article" date="2011" name="Proc. Natl. Acad. Sci. U.S.A.">
        <title>Structural basis for human NADPH-cytochrome P450 oxidoreductase deficiency.</title>
        <authorList>
            <person name="Xia C."/>
            <person name="Panda S.P."/>
            <person name="Marohnic C.C."/>
            <person name="Martasek P."/>
            <person name="Masters B.S."/>
            <person name="Kim J.J."/>
        </authorList>
    </citation>
    <scope>X-RAY CRYSTALLOGRAPHY (1.40 ANGSTROMS) OF 241-677 IN COMPLEX WITH FAD; FMN AND NADP</scope>
</reference>
<reference key="15">
    <citation type="journal article" date="2004" name="Am. J. Med. Genet. A">
        <title>Compound heterozygous mutations of cytochrome P450 oxidoreductase gene (POR) in two patients with Antley-Bixler syndrome.</title>
        <authorList>
            <person name="Adachi M."/>
            <person name="Tachibana K."/>
            <person name="Asakura Y."/>
            <person name="Yamamoto T."/>
            <person name="Hanaki K."/>
            <person name="Oka A."/>
        </authorList>
    </citation>
    <scope>VARIANT ABS1 HIS-454</scope>
</reference>
<reference key="16">
    <citation type="journal article" date="2005" name="J. Clin. Endocrinol. Metab.">
        <title>Cytochrome P450 oxidoreductase gene mutations and Antley-Bixler syndrome with abnormal genitalia and/or impaired steroidogenesis: molecular and clinical studies in 10 patients.</title>
        <authorList>
            <person name="Fukami M."/>
            <person name="Horikawa R."/>
            <person name="Nagai T."/>
            <person name="Tanaka T."/>
            <person name="Naiki Y."/>
            <person name="Sato N."/>
            <person name="Okuyama T."/>
            <person name="Nakai H."/>
            <person name="Soneda S."/>
            <person name="Tachibana K."/>
            <person name="Matsuo N."/>
            <person name="Sato S."/>
            <person name="Homma K."/>
            <person name="Nishimura G."/>
            <person name="Hasegawa T."/>
            <person name="Ogata T."/>
        </authorList>
    </citation>
    <scope>VARIANTS ABS1 HIS-454; CYS-575 AND 608-LEU--TRP-617 DELINS ARG</scope>
    <scope>VARIANT VAL-500</scope>
</reference>
<reference key="17">
    <citation type="journal article" date="2004" name="Lancet">
        <title>Congenital adrenal hyperplasia caused by mutant P450 oxidoreductase and human androgen synthesis: analytical study.</title>
        <authorList>
            <person name="Arlt W."/>
            <person name="Walker E.A."/>
            <person name="Draper N."/>
            <person name="Ivison H.E."/>
            <person name="Ride J.P."/>
            <person name="Hammer F."/>
            <person name="Chalder S.M."/>
            <person name="Borucka-Mankiewicz M."/>
            <person name="Hauffa B.P."/>
            <person name="Malunowicz E.M."/>
            <person name="Stewart P.M."/>
            <person name="Shackleton C.H.L."/>
        </authorList>
    </citation>
    <scope>VARIANTS DISPORD ASP-178; PRO-284; HIS-454 AND TYR-566</scope>
    <scope>CHARACTERIZATION OF VARIANTS DISPORD ASP-178; PRO-284; HIS-454 AND TYR-566</scope>
</reference>
<reference key="18">
    <citation type="journal article" date="2004" name="Nat. Genet.">
        <title>Mutant P450 oxidoreductase causes disordered steroidogenesis with and without Antley-Bixler syndrome.</title>
        <authorList>
            <person name="Flueck C.E."/>
            <person name="Tajima T."/>
            <person name="Pandey A.V."/>
            <person name="Arlt W."/>
            <person name="Okuhara K."/>
            <person name="Verge C.F."/>
            <person name="Jabs E.W."/>
            <person name="Mendonca B.B."/>
            <person name="Fujieda K."/>
            <person name="Miller W.L."/>
        </authorList>
    </citation>
    <scope>VARIANTS ABS1 PRO-284; HIS-454 AND GLU-489</scope>
    <scope>VARIANTS DISPORD TYR-566 AND PHE-605</scope>
    <scope>CHARACTERIZATION OF VARIANTS ABS1 PRO-284; HIS-454 AND GLU-489</scope>
    <scope>CHARACTERIZATION OF VARIANTS DISPORD TYR-566 AND PHE-605</scope>
</reference>
<reference key="19">
    <citation type="journal article" date="2017" name="Hum. Mutat.">
        <title>Identical NR5A1 missense mutations in two unrelated 46,XX individuals with testicular tissues.</title>
        <authorList>
            <person name="Igarashi M."/>
            <person name="Takasawa K."/>
            <person name="Hakoda A."/>
            <person name="Kanno J."/>
            <person name="Takada S."/>
            <person name="Miyado M."/>
            <person name="Baba T."/>
            <person name="Morohashi K.I."/>
            <person name="Tajima T."/>
            <person name="Hata K."/>
            <person name="Nakabayashi K."/>
            <person name="Matsubara Y."/>
            <person name="Sekido R."/>
            <person name="Ogata T."/>
            <person name="Kashimada K."/>
            <person name="Fukami M."/>
        </authorList>
    </citation>
    <scope>VARIANT HIS-454</scope>
</reference>
<accession>P16435</accession>
<accession>Q16455</accession>
<accession>Q197M5</accession>
<accession>Q8N181</accession>
<accession>Q9H3M8</accession>
<accession>Q9UDT3</accession>
<feature type="initiator methionine" description="Removed" evidence="11">
    <location>
        <position position="1"/>
    </location>
</feature>
<feature type="chain" id="PRO_0000167596" description="NADPH--cytochrome P450 reductase">
    <location>
        <begin position="2"/>
        <end position="677"/>
    </location>
</feature>
<feature type="topological domain" description="Lumenal" evidence="1">
    <location>
        <begin position="2"/>
        <end position="21"/>
    </location>
</feature>
<feature type="transmembrane region" description="Helical" evidence="1">
    <location>
        <begin position="22"/>
        <end position="42"/>
    </location>
</feature>
<feature type="topological domain" description="Cytoplasmic" evidence="1">
    <location>
        <begin position="43"/>
        <end position="677"/>
    </location>
</feature>
<feature type="domain" description="Flavodoxin-like" evidence="1">
    <location>
        <begin position="80"/>
        <end position="224"/>
    </location>
</feature>
<feature type="domain" description="FAD-binding FR-type" evidence="1">
    <location>
        <begin position="279"/>
        <end position="521"/>
    </location>
</feature>
<feature type="binding site" evidence="1 2 10">
    <location>
        <begin position="86"/>
        <end position="91"/>
    </location>
    <ligand>
        <name>FMN</name>
        <dbReference type="ChEBI" id="CHEBI:58210"/>
    </ligand>
</feature>
<feature type="binding site" evidence="1 2 10">
    <location>
        <begin position="138"/>
        <end position="141"/>
    </location>
    <ligand>
        <name>FMN</name>
        <dbReference type="ChEBI" id="CHEBI:58210"/>
    </ligand>
</feature>
<feature type="binding site" evidence="1 2 10">
    <location>
        <begin position="173"/>
        <end position="182"/>
    </location>
    <ligand>
        <name>FMN</name>
        <dbReference type="ChEBI" id="CHEBI:58210"/>
    </ligand>
</feature>
<feature type="binding site" evidence="1 2 10">
    <location>
        <position position="208"/>
    </location>
    <ligand>
        <name>FMN</name>
        <dbReference type="ChEBI" id="CHEBI:58210"/>
    </ligand>
</feature>
<feature type="binding site" evidence="1 10">
    <location>
        <position position="298"/>
    </location>
    <ligand>
        <name>NADP(+)</name>
        <dbReference type="ChEBI" id="CHEBI:58349"/>
    </ligand>
</feature>
<feature type="binding site" evidence="1 9 10">
    <location>
        <position position="424"/>
    </location>
    <ligand>
        <name>FAD</name>
        <dbReference type="ChEBI" id="CHEBI:57692"/>
    </ligand>
</feature>
<feature type="binding site" evidence="1 9 10">
    <location>
        <begin position="454"/>
        <end position="457"/>
    </location>
    <ligand>
        <name>FAD</name>
        <dbReference type="ChEBI" id="CHEBI:57692"/>
    </ligand>
</feature>
<feature type="binding site" evidence="1 9 10">
    <location>
        <begin position="472"/>
        <end position="474"/>
    </location>
    <ligand>
        <name>FAD</name>
        <dbReference type="ChEBI" id="CHEBI:57692"/>
    </ligand>
</feature>
<feature type="binding site" evidence="1 9 10">
    <location>
        <position position="478"/>
    </location>
    <ligand>
        <name>FAD</name>
        <dbReference type="ChEBI" id="CHEBI:57692"/>
    </ligand>
</feature>
<feature type="binding site" evidence="1 9 10">
    <location>
        <begin position="488"/>
        <end position="491"/>
    </location>
    <ligand>
        <name>FAD</name>
        <dbReference type="ChEBI" id="CHEBI:57692"/>
    </ligand>
</feature>
<feature type="binding site" evidence="1 10">
    <location>
        <position position="535"/>
    </location>
    <ligand>
        <name>NADP(+)</name>
        <dbReference type="ChEBI" id="CHEBI:58349"/>
    </ligand>
</feature>
<feature type="binding site" evidence="1 10">
    <location>
        <begin position="596"/>
        <end position="597"/>
    </location>
    <ligand>
        <name>NADP(+)</name>
        <dbReference type="ChEBI" id="CHEBI:58349"/>
    </ligand>
</feature>
<feature type="binding site" evidence="1 10">
    <location>
        <begin position="602"/>
        <end position="606"/>
    </location>
    <ligand>
        <name>NADP(+)</name>
        <dbReference type="ChEBI" id="CHEBI:58349"/>
    </ligand>
</feature>
<feature type="binding site" evidence="1 10">
    <location>
        <position position="638"/>
    </location>
    <ligand>
        <name>NADP(+)</name>
        <dbReference type="ChEBI" id="CHEBI:58349"/>
    </ligand>
</feature>
<feature type="binding site" evidence="1 9 10">
    <location>
        <position position="676"/>
    </location>
    <ligand>
        <name>FAD</name>
        <dbReference type="ChEBI" id="CHEBI:57692"/>
    </ligand>
</feature>
<feature type="modified residue" description="N-acetylglycine" evidence="11">
    <location>
        <position position="2"/>
    </location>
</feature>
<feature type="modified residue" description="Phosphoserine" evidence="15">
    <location>
        <position position="63"/>
    </location>
</feature>
<feature type="sequence variant" id="VAR_021154" description="In DISPORD; complete loss of activity; dbSNP:rs72552771." evidence="4">
    <original>Y</original>
    <variation>D</variation>
    <location>
        <position position="178"/>
    </location>
</feature>
<feature type="sequence variant" id="VAR_047885" description="In dbSNP:rs17853284." evidence="7 13">
    <original>P</original>
    <variation>L</variation>
    <location>
        <position position="225"/>
    </location>
</feature>
<feature type="sequence variant" id="VAR_047886" description="In dbSNP:rs41299514." evidence="13">
    <original>D</original>
    <variation>N</variation>
    <location>
        <position position="252"/>
    </location>
</feature>
<feature type="sequence variant" id="VAR_021155" description="In ABS1 and DISPORD; significant reduction of activity; dbSNP:rs121912974." evidence="3 4">
    <original>A</original>
    <variation>P</variation>
    <location>
        <position position="284"/>
    </location>
</feature>
<feature type="sequence variant" id="VAR_021156" description="In ABS1 and DISPORD; significant reduction of activity; dbSNP:rs28931608." evidence="3 4 5 6 12">
    <original>R</original>
    <variation>H</variation>
    <location>
        <position position="454"/>
    </location>
</feature>
<feature type="sequence variant" id="VAR_021157" description="In ABS1; significant reduction of activity; dbSNP:rs28931606." evidence="3">
    <original>V</original>
    <variation>E</variation>
    <location>
        <position position="489"/>
    </location>
</feature>
<feature type="sequence variant" id="VAR_004617" description="In dbSNP:rs1057868." evidence="6 7 8 13">
    <original>A</original>
    <variation>V</variation>
    <location>
        <position position="500"/>
    </location>
</feature>
<feature type="sequence variant" id="VAR_004618" description="In dbSNP:rs781960466.">
    <original>R</original>
    <variation>Q</variation>
    <location>
        <position position="551"/>
    </location>
</feature>
<feature type="sequence variant" id="VAR_021158" description="In DISPORD; significant reduction of activity; dbSNP:rs28931607." evidence="3 4">
    <original>C</original>
    <variation>Y</variation>
    <location>
        <position position="566"/>
    </location>
</feature>
<feature type="sequence variant" id="VAR_021159" description="In ABS1; dbSNP:rs121912975." evidence="6">
    <original>Y</original>
    <variation>C</variation>
    <location>
        <position position="575"/>
    </location>
</feature>
<feature type="sequence variant" id="VAR_021160" description="In DISPORD; significant reduction of activity; dbSNP:rs72552772." evidence="3">
    <original>V</original>
    <variation>F</variation>
    <location>
        <position position="605"/>
    </location>
</feature>
<feature type="sequence variant" id="VAR_021161" description="In ABS1.">
    <original>LKQDREHLW</original>
    <variation>R</variation>
    <location>
        <begin position="609"/>
        <end position="617"/>
    </location>
</feature>
<feature type="sequence conflict" description="In Ref. 3; BAB18572." evidence="14" ref="3">
    <original>M</original>
    <variation>L</variation>
    <location>
        <position position="405"/>
    </location>
</feature>
<feature type="sequence conflict" description="In Ref. 1; AAB21814 and 3; BAB18572." evidence="14" ref="1 3">
    <original>F</original>
    <variation>L</variation>
    <location>
        <position position="518"/>
    </location>
</feature>
<feature type="sequence conflict" description="In Ref. 1; AAB21814." evidence="14" ref="1">
    <original>VA</original>
    <variation>WH</variation>
    <location>
        <begin position="537"/>
        <end position="538"/>
    </location>
</feature>
<feature type="helix" evidence="16">
    <location>
        <begin position="69"/>
        <end position="76"/>
    </location>
</feature>
<feature type="strand" evidence="16">
    <location>
        <begin position="79"/>
        <end position="85"/>
    </location>
</feature>
<feature type="strand" evidence="16">
    <location>
        <begin position="87"/>
        <end position="89"/>
    </location>
</feature>
<feature type="helix" evidence="16">
    <location>
        <begin position="90"/>
        <end position="101"/>
    </location>
</feature>
<feature type="helix" evidence="16">
    <location>
        <begin position="102"/>
        <end position="105"/>
    </location>
</feature>
<feature type="strand" evidence="16">
    <location>
        <begin position="109"/>
        <end position="112"/>
    </location>
</feature>
<feature type="helix" evidence="16">
    <location>
        <begin position="114"/>
        <end position="116"/>
    </location>
</feature>
<feature type="helix" evidence="16">
    <location>
        <begin position="119"/>
        <end position="127"/>
    </location>
</feature>
<feature type="strand" evidence="16">
    <location>
        <begin position="132"/>
        <end position="138"/>
    </location>
</feature>
<feature type="helix" evidence="16">
    <location>
        <begin position="141"/>
        <end position="143"/>
    </location>
</feature>
<feature type="helix" evidence="16">
    <location>
        <begin position="147"/>
        <end position="149"/>
    </location>
</feature>
<feature type="helix" evidence="16">
    <location>
        <begin position="150"/>
        <end position="158"/>
    </location>
</feature>
<feature type="strand" evidence="16">
    <location>
        <begin position="167"/>
        <end position="174"/>
    </location>
</feature>
<feature type="strand" evidence="16">
    <location>
        <begin position="178"/>
        <end position="180"/>
    </location>
</feature>
<feature type="helix" evidence="16">
    <location>
        <begin position="183"/>
        <end position="194"/>
    </location>
</feature>
<feature type="strand" evidence="16">
    <location>
        <begin position="198"/>
        <end position="201"/>
    </location>
</feature>
<feature type="strand" evidence="16">
    <location>
        <begin position="204"/>
        <end position="207"/>
    </location>
</feature>
<feature type="turn" evidence="18">
    <location>
        <begin position="208"/>
        <end position="210"/>
    </location>
</feature>
<feature type="helix" evidence="16">
    <location>
        <begin position="212"/>
        <end position="231"/>
    </location>
</feature>
<feature type="strand" evidence="17">
    <location>
        <begin position="245"/>
        <end position="249"/>
    </location>
</feature>
<feature type="helix" evidence="17">
    <location>
        <begin position="255"/>
        <end position="257"/>
    </location>
</feature>
<feature type="strand" evidence="17">
    <location>
        <begin position="259"/>
        <end position="261"/>
    </location>
</feature>
<feature type="strand" evidence="17">
    <location>
        <begin position="263"/>
        <end position="265"/>
    </location>
</feature>
<feature type="turn" evidence="17">
    <location>
        <begin position="266"/>
        <end position="270"/>
    </location>
</feature>
<feature type="strand" evidence="17">
    <location>
        <begin position="278"/>
        <end position="280"/>
    </location>
</feature>
<feature type="strand" evidence="17">
    <location>
        <begin position="282"/>
        <end position="291"/>
    </location>
</feature>
<feature type="strand" evidence="17">
    <location>
        <begin position="294"/>
        <end position="298"/>
    </location>
</feature>
<feature type="strand" evidence="17">
    <location>
        <begin position="300"/>
        <end position="306"/>
    </location>
</feature>
<feature type="strand" evidence="17">
    <location>
        <begin position="319"/>
        <end position="322"/>
    </location>
</feature>
<feature type="helix" evidence="17">
    <location>
        <begin position="328"/>
        <end position="338"/>
    </location>
</feature>
<feature type="strand" evidence="17">
    <location>
        <begin position="345"/>
        <end position="352"/>
    </location>
</feature>
<feature type="strand" evidence="17">
    <location>
        <begin position="360"/>
        <end position="366"/>
    </location>
</feature>
<feature type="helix" evidence="17">
    <location>
        <begin position="367"/>
        <end position="373"/>
    </location>
</feature>
<feature type="helix" evidence="17">
    <location>
        <begin position="383"/>
        <end position="389"/>
    </location>
</feature>
<feature type="helix" evidence="17">
    <location>
        <begin position="390"/>
        <end position="392"/>
    </location>
</feature>
<feature type="helix" evidence="17">
    <location>
        <begin position="396"/>
        <end position="406"/>
    </location>
</feature>
<feature type="strand" evidence="19">
    <location>
        <begin position="407"/>
        <end position="409"/>
    </location>
</feature>
<feature type="helix" evidence="17">
    <location>
        <begin position="410"/>
        <end position="419"/>
    </location>
</feature>
<feature type="turn" evidence="17">
    <location>
        <begin position="420"/>
        <end position="424"/>
    </location>
</feature>
<feature type="helix" evidence="17">
    <location>
        <begin position="427"/>
        <end position="433"/>
    </location>
</feature>
<feature type="helix" evidence="17">
    <location>
        <begin position="441"/>
        <end position="447"/>
    </location>
</feature>
<feature type="strand" evidence="17">
    <location>
        <begin position="454"/>
        <end position="457"/>
    </location>
</feature>
<feature type="turn" evidence="17">
    <location>
        <begin position="462"/>
        <end position="464"/>
    </location>
</feature>
<feature type="strand" evidence="17">
    <location>
        <begin position="468"/>
        <end position="474"/>
    </location>
</feature>
<feature type="strand" evidence="17">
    <location>
        <begin position="477"/>
        <end position="479"/>
    </location>
</feature>
<feature type="strand" evidence="17">
    <location>
        <begin position="485"/>
        <end position="487"/>
    </location>
</feature>
<feature type="helix" evidence="17">
    <location>
        <begin position="489"/>
        <end position="495"/>
    </location>
</feature>
<feature type="turn" evidence="16">
    <location>
        <begin position="501"/>
        <end position="503"/>
    </location>
</feature>
<feature type="strand" evidence="17">
    <location>
        <begin position="508"/>
        <end position="514"/>
    </location>
</feature>
<feature type="strand" evidence="17">
    <location>
        <begin position="528"/>
        <end position="531"/>
    </location>
</feature>
<feature type="helix" evidence="17">
    <location>
        <begin position="534"/>
        <end position="537"/>
    </location>
</feature>
<feature type="helix" evidence="17">
    <location>
        <begin position="538"/>
        <end position="553"/>
    </location>
</feature>
<feature type="strand" evidence="17">
    <location>
        <begin position="560"/>
        <end position="567"/>
    </location>
</feature>
<feature type="turn" evidence="17">
    <location>
        <begin position="569"/>
        <end position="571"/>
    </location>
</feature>
<feature type="helix" evidence="17">
    <location>
        <begin position="576"/>
        <end position="584"/>
    </location>
</feature>
<feature type="strand" evidence="17">
    <location>
        <begin position="587"/>
        <end position="595"/>
    </location>
</feature>
<feature type="strand" evidence="17">
    <location>
        <begin position="598"/>
        <end position="601"/>
    </location>
</feature>
<feature type="helix" evidence="17">
    <location>
        <begin position="605"/>
        <end position="611"/>
    </location>
</feature>
<feature type="helix" evidence="17">
    <location>
        <begin position="613"/>
        <end position="621"/>
    </location>
</feature>
<feature type="strand" evidence="17">
    <location>
        <begin position="625"/>
        <end position="631"/>
    </location>
</feature>
<feature type="turn" evidence="17">
    <location>
        <begin position="632"/>
        <end position="634"/>
    </location>
</feature>
<feature type="helix" evidence="17">
    <location>
        <begin position="635"/>
        <end position="650"/>
    </location>
</feature>
<feature type="helix" evidence="17">
    <location>
        <begin position="655"/>
        <end position="667"/>
    </location>
</feature>
<feature type="strand" evidence="17">
    <location>
        <begin position="670"/>
        <end position="676"/>
    </location>
</feature>
<sequence>MGDSHVDTSSTVSEAVAEEVSLFSMTDMILFSLIVGLLTYWFLFRKKKEEVPEFTKIQTLTSSVRESSFVEKMKKTGRNIIVFYGSQTGTAEEFANRLSKDAHRYGMRGMSADPEEYDLADLSSLPEIDNALVVFCMATYGEGDPTDNAQDFYDWLQETDVDLSGVKFAVFGLGNKTYEHFNAMGKYVDKRLEQLGAQRIFELGLGDDDGNLEEDFITWREQFWPAVCEHFGVEATGEESSIRQYELVVHTDIDAAKVYMGEMGRLKSYENQKPPFDAKNPFLAAVTTNRKLNQGTERHLMHLELDISDSKIRYESGDHVAVYPANDSALVNQLGKILGADLDVVMSLNNLDEESNKKHPFPCPTSYRTALTYYLDITNPPRTNVLYELAQYASEPSEQELLRKMASSSGEGKELYLSWVVEARRHILAILQDCPSLRPPIDHLCELLPRLQARYYSIASSSKVHPNSVHICAVVVEYETKAGRINKGVATNWLRAKEPAGENGGRALVPMFVRKSQFRLPFKATTPVIMVGPGTGVAPFIGFIQERAWLRQQGKEVGETLLYYGCRRSDEDYLYREELAQFHRDGALTQLNVAFSREQSHKVYVQHLLKQDREHLWKLIEGGAHIYVCGDARNMARDVQNTFYDIVAELGAMEHAQAVDYIKKLMTKGRYSLDVWS</sequence>
<evidence type="ECO:0000255" key="1">
    <source>
        <dbReference type="HAMAP-Rule" id="MF_03212"/>
    </source>
</evidence>
<evidence type="ECO:0000269" key="2">
    <source>
    </source>
</evidence>
<evidence type="ECO:0000269" key="3">
    <source>
    </source>
</evidence>
<evidence type="ECO:0000269" key="4">
    <source>
    </source>
</evidence>
<evidence type="ECO:0000269" key="5">
    <source>
    </source>
</evidence>
<evidence type="ECO:0000269" key="6">
    <source>
    </source>
</evidence>
<evidence type="ECO:0000269" key="7">
    <source>
    </source>
</evidence>
<evidence type="ECO:0000269" key="8">
    <source>
    </source>
</evidence>
<evidence type="ECO:0000269" key="9">
    <source>
    </source>
</evidence>
<evidence type="ECO:0000269" key="10">
    <source>
    </source>
</evidence>
<evidence type="ECO:0000269" key="11">
    <source>
    </source>
</evidence>
<evidence type="ECO:0000269" key="12">
    <source>
    </source>
</evidence>
<evidence type="ECO:0000269" key="13">
    <source ref="4"/>
</evidence>
<evidence type="ECO:0000305" key="14"/>
<evidence type="ECO:0007744" key="15">
    <source>
    </source>
</evidence>
<evidence type="ECO:0007829" key="16">
    <source>
        <dbReference type="PDB" id="3QE2"/>
    </source>
</evidence>
<evidence type="ECO:0007829" key="17">
    <source>
        <dbReference type="PDB" id="3QFS"/>
    </source>
</evidence>
<evidence type="ECO:0007829" key="18">
    <source>
        <dbReference type="PDB" id="5EMN"/>
    </source>
</evidence>
<evidence type="ECO:0007829" key="19">
    <source>
        <dbReference type="PDB" id="5FA6"/>
    </source>
</evidence>
<gene>
    <name evidence="1" type="primary">POR</name>
    <name type="synonym">CYPOR</name>
</gene>
<dbReference type="EC" id="1.6.2.4" evidence="1"/>
<dbReference type="EMBL" id="S90469">
    <property type="protein sequence ID" value="AAB21814.1"/>
    <property type="molecule type" value="mRNA"/>
</dbReference>
<dbReference type="EMBL" id="AF258341">
    <property type="protein sequence ID" value="AAG09798.1"/>
    <property type="molecule type" value="mRNA"/>
</dbReference>
<dbReference type="EMBL" id="AB051763">
    <property type="protein sequence ID" value="BAB18572.1"/>
    <property type="molecule type" value="mRNA"/>
</dbReference>
<dbReference type="EMBL" id="DQ640499">
    <property type="protein sequence ID" value="ABF70199.1"/>
    <property type="molecule type" value="Genomic_DNA"/>
</dbReference>
<dbReference type="EMBL" id="AC005067">
    <property type="protein sequence ID" value="AAD45961.1"/>
    <property type="molecule type" value="Genomic_DNA"/>
</dbReference>
<dbReference type="EMBL" id="AC006330">
    <property type="status" value="NOT_ANNOTATED_CDS"/>
    <property type="molecule type" value="Genomic_DNA"/>
</dbReference>
<dbReference type="EMBL" id="BC034277">
    <property type="protein sequence ID" value="AAH34277.1"/>
    <property type="status" value="ALT_INIT"/>
    <property type="molecule type" value="mRNA"/>
</dbReference>
<dbReference type="CCDS" id="CCDS5579.2"/>
<dbReference type="PIR" id="A33421">
    <property type="entry name" value="A60557"/>
</dbReference>
<dbReference type="RefSeq" id="NP_000932.3">
    <property type="nucleotide sequence ID" value="NM_000941.2"/>
</dbReference>
<dbReference type="RefSeq" id="NP_001354491.2">
    <property type="nucleotide sequence ID" value="NM_001367562.3"/>
</dbReference>
<dbReference type="RefSeq" id="NP_001369586.2">
    <property type="nucleotide sequence ID" value="NM_001382657.2"/>
</dbReference>
<dbReference type="RefSeq" id="NP_001369587.2">
    <property type="nucleotide sequence ID" value="NM_001382658.3"/>
</dbReference>
<dbReference type="RefSeq" id="NP_001369588.2">
    <property type="nucleotide sequence ID" value="NM_001382659.3"/>
</dbReference>
<dbReference type="RefSeq" id="NP_001382342.1">
    <property type="nucleotide sequence ID" value="NM_001395413.1"/>
</dbReference>
<dbReference type="PDB" id="1B1C">
    <property type="method" value="X-ray"/>
    <property type="resolution" value="1.93 A"/>
    <property type="chains" value="A=61-241"/>
</dbReference>
<dbReference type="PDB" id="3FJO">
    <property type="method" value="X-ray"/>
    <property type="resolution" value="2.50 A"/>
    <property type="chains" value="A=232-677"/>
</dbReference>
<dbReference type="PDB" id="3QE2">
    <property type="method" value="X-ray"/>
    <property type="resolution" value="1.75 A"/>
    <property type="chains" value="A/B=64-677"/>
</dbReference>
<dbReference type="PDB" id="3QFC">
    <property type="method" value="X-ray"/>
    <property type="resolution" value="1.80 A"/>
    <property type="chains" value="A/B=64-677"/>
</dbReference>
<dbReference type="PDB" id="3QFR">
    <property type="method" value="X-ray"/>
    <property type="resolution" value="2.40 A"/>
    <property type="chains" value="A/B=64-677"/>
</dbReference>
<dbReference type="PDB" id="3QFS">
    <property type="method" value="X-ray"/>
    <property type="resolution" value="1.40 A"/>
    <property type="chains" value="A=241-677"/>
</dbReference>
<dbReference type="PDB" id="3QFT">
    <property type="method" value="X-ray"/>
    <property type="resolution" value="1.40 A"/>
    <property type="chains" value="A=241-677"/>
</dbReference>
<dbReference type="PDB" id="5EMN">
    <property type="method" value="X-ray"/>
    <property type="resolution" value="2.20 A"/>
    <property type="chains" value="A/B=64-677"/>
</dbReference>
<dbReference type="PDB" id="5FA6">
    <property type="method" value="X-ray"/>
    <property type="resolution" value="2.30 A"/>
    <property type="chains" value="A/B=64-677"/>
</dbReference>
<dbReference type="PDBsum" id="1B1C"/>
<dbReference type="PDBsum" id="3FJO"/>
<dbReference type="PDBsum" id="3QE2"/>
<dbReference type="PDBsum" id="3QFC"/>
<dbReference type="PDBsum" id="3QFR"/>
<dbReference type="PDBsum" id="3QFS"/>
<dbReference type="PDBsum" id="3QFT"/>
<dbReference type="PDBsum" id="5EMN"/>
<dbReference type="PDBsum" id="5FA6"/>
<dbReference type="BMRB" id="P16435"/>
<dbReference type="SMR" id="P16435"/>
<dbReference type="BioGRID" id="111443">
    <property type="interactions" value="239"/>
</dbReference>
<dbReference type="DIP" id="DIP-29682N"/>
<dbReference type="FunCoup" id="P16435">
    <property type="interactions" value="2809"/>
</dbReference>
<dbReference type="IntAct" id="P16435">
    <property type="interactions" value="63"/>
</dbReference>
<dbReference type="MINT" id="P16435"/>
<dbReference type="STRING" id="9606.ENSP00000419970"/>
<dbReference type="BindingDB" id="P16435"/>
<dbReference type="ChEMBL" id="CHEMBL2169731"/>
<dbReference type="DrugBank" id="DB06263">
    <property type="generic name" value="Amrubicin"/>
</dbReference>
<dbReference type="DrugBank" id="DB00865">
    <property type="generic name" value="Benzphetamine"/>
</dbReference>
<dbReference type="DrugBank" id="DB00694">
    <property type="generic name" value="Daunorubicin"/>
</dbReference>
<dbReference type="DrugBank" id="DB00997">
    <property type="generic name" value="Doxorubicin"/>
</dbReference>
<dbReference type="DrugBank" id="DB01466">
    <property type="generic name" value="Ethylmorphine"/>
</dbReference>
<dbReference type="DrugBank" id="DB03147">
    <property type="generic name" value="Flavin adenine dinucleotide"/>
</dbReference>
<dbReference type="DrugBank" id="DB03247">
    <property type="generic name" value="Flavin mononucleotide"/>
</dbReference>
<dbReference type="DrugBank" id="DB09332">
    <property type="generic name" value="Kappadione"/>
</dbReference>
<dbReference type="DrugBank" id="DB00166">
    <property type="generic name" value="Lipoic acid"/>
</dbReference>
<dbReference type="DrugBank" id="DB00305">
    <property type="generic name" value="Mitomycin"/>
</dbReference>
<dbReference type="DrugBank" id="DB03461">
    <property type="generic name" value="Nicotinamide adenine dinucleotide phosphate"/>
</dbReference>
<dbReference type="DrugBank" id="DB00665">
    <property type="generic name" value="Nilutamide"/>
</dbReference>
<dbReference type="DrugBank" id="DB00698">
    <property type="generic name" value="Nitrofurantoin"/>
</dbReference>
<dbReference type="GlyConnect" id="1535">
    <property type="glycosylation" value="1 N-Linked glycan (1 site)"/>
</dbReference>
<dbReference type="GlyCosmos" id="P16435">
    <property type="glycosylation" value="1 site, 1 glycan"/>
</dbReference>
<dbReference type="GlyGen" id="P16435">
    <property type="glycosylation" value="5 sites, 2 N-linked glycans (2 sites), 1 O-linked glycan (3 sites)"/>
</dbReference>
<dbReference type="iPTMnet" id="P16435"/>
<dbReference type="PhosphoSitePlus" id="P16435"/>
<dbReference type="SwissPalm" id="P16435"/>
<dbReference type="BioMuta" id="POR"/>
<dbReference type="DMDM" id="2851393"/>
<dbReference type="jPOST" id="P16435"/>
<dbReference type="MassIVE" id="P16435"/>
<dbReference type="PaxDb" id="9606-ENSP00000419970"/>
<dbReference type="PeptideAtlas" id="P16435"/>
<dbReference type="ProteomicsDB" id="53360"/>
<dbReference type="Pumba" id="P16435"/>
<dbReference type="Antibodypedia" id="2433">
    <property type="antibodies" value="463 antibodies from 34 providers"/>
</dbReference>
<dbReference type="DNASU" id="5447"/>
<dbReference type="Ensembl" id="ENST00000461988.6">
    <property type="protein sequence ID" value="ENSP00000419970.2"/>
    <property type="gene ID" value="ENSG00000127948.17"/>
</dbReference>
<dbReference type="GeneID" id="5447"/>
<dbReference type="MANE-Select" id="ENST00000461988.6">
    <property type="protein sequence ID" value="ENSP00000419970.2"/>
    <property type="RefSeq nucleotide sequence ID" value="NM_001395413.1"/>
    <property type="RefSeq protein sequence ID" value="NP_001382342.1"/>
</dbReference>
<dbReference type="UCSC" id="uc003udy.4">
    <property type="organism name" value="human"/>
</dbReference>
<dbReference type="AGR" id="HGNC:9208"/>
<dbReference type="CTD" id="5447"/>
<dbReference type="DisGeNET" id="5447"/>
<dbReference type="GeneCards" id="POR"/>
<dbReference type="GeneReviews" id="POR"/>
<dbReference type="HGNC" id="HGNC:9208">
    <property type="gene designation" value="POR"/>
</dbReference>
<dbReference type="HPA" id="ENSG00000127948">
    <property type="expression patterns" value="Tissue enhanced (liver)"/>
</dbReference>
<dbReference type="MalaCards" id="POR"/>
<dbReference type="MIM" id="124015">
    <property type="type" value="gene"/>
</dbReference>
<dbReference type="MIM" id="201750">
    <property type="type" value="phenotype"/>
</dbReference>
<dbReference type="MIM" id="613571">
    <property type="type" value="phenotype"/>
</dbReference>
<dbReference type="neXtProt" id="NX_P16435"/>
<dbReference type="OpenTargets" id="ENSG00000127948"/>
<dbReference type="Orphanet" id="63269">
    <property type="disease" value="Antley-Bixler syndrome with genital anomaly and disorder of steroidogenesis"/>
</dbReference>
<dbReference type="Orphanet" id="95699">
    <property type="disease" value="Congenital adrenal hyperplasia due to cytochrome P450 oxidoreductase deficiency"/>
</dbReference>
<dbReference type="PharmGKB" id="PA33532"/>
<dbReference type="VEuPathDB" id="HostDB:ENSG00000127948"/>
<dbReference type="eggNOG" id="KOG1158">
    <property type="taxonomic scope" value="Eukaryota"/>
</dbReference>
<dbReference type="GeneTree" id="ENSGT00940000156847"/>
<dbReference type="HOGENOM" id="CLU_001570_17_3_1"/>
<dbReference type="InParanoid" id="P16435"/>
<dbReference type="OrthoDB" id="1856718at2759"/>
<dbReference type="PAN-GO" id="P16435">
    <property type="GO annotations" value="5 GO annotations based on evolutionary models"/>
</dbReference>
<dbReference type="PhylomeDB" id="P16435"/>
<dbReference type="TreeFam" id="TF105719"/>
<dbReference type="BioCyc" id="MetaCyc:HS05140-MONOMER"/>
<dbReference type="BRENDA" id="1.6.2.4">
    <property type="organism ID" value="2681"/>
</dbReference>
<dbReference type="PathwayCommons" id="P16435"/>
<dbReference type="Reactome" id="R-HSA-211897">
    <property type="pathway name" value="Cytochrome P450 - arranged by substrate type"/>
</dbReference>
<dbReference type="SABIO-RK" id="P16435"/>
<dbReference type="SignaLink" id="P16435"/>
<dbReference type="SIGNOR" id="P16435"/>
<dbReference type="BioGRID-ORCS" id="5447">
    <property type="hits" value="15 hits in 1163 CRISPR screens"/>
</dbReference>
<dbReference type="ChiTaRS" id="POR">
    <property type="organism name" value="human"/>
</dbReference>
<dbReference type="EvolutionaryTrace" id="P16435"/>
<dbReference type="GeneWiki" id="Cytochrome_P450_reductase"/>
<dbReference type="GenomeRNAi" id="5447"/>
<dbReference type="Pharos" id="P16435">
    <property type="development level" value="Tbio"/>
</dbReference>
<dbReference type="PRO" id="PR:P16435"/>
<dbReference type="Proteomes" id="UP000005640">
    <property type="component" value="Chromosome 7"/>
</dbReference>
<dbReference type="RNAct" id="P16435">
    <property type="molecule type" value="protein"/>
</dbReference>
<dbReference type="Bgee" id="ENSG00000127948">
    <property type="expression patterns" value="Expressed in adrenal tissue and 183 other cell types or tissues"/>
</dbReference>
<dbReference type="ExpressionAtlas" id="P16435">
    <property type="expression patterns" value="baseline and differential"/>
</dbReference>
<dbReference type="GO" id="GO:0005829">
    <property type="term" value="C:cytosol"/>
    <property type="evidence" value="ECO:0000318"/>
    <property type="project" value="GO_Central"/>
</dbReference>
<dbReference type="GO" id="GO:0005789">
    <property type="term" value="C:endoplasmic reticulum membrane"/>
    <property type="evidence" value="ECO:0000304"/>
    <property type="project" value="Reactome"/>
</dbReference>
<dbReference type="GO" id="GO:0043231">
    <property type="term" value="C:intracellular membrane-bounded organelle"/>
    <property type="evidence" value="ECO:0000314"/>
    <property type="project" value="UniProtKB"/>
</dbReference>
<dbReference type="GO" id="GO:0016020">
    <property type="term" value="C:membrane"/>
    <property type="evidence" value="ECO:0007005"/>
    <property type="project" value="UniProtKB"/>
</dbReference>
<dbReference type="GO" id="GO:0004128">
    <property type="term" value="F:cytochrome-b5 reductase activity, acting on NAD(P)H"/>
    <property type="evidence" value="ECO:0007669"/>
    <property type="project" value="Ensembl"/>
</dbReference>
<dbReference type="GO" id="GO:0009055">
    <property type="term" value="F:electron transfer activity"/>
    <property type="evidence" value="ECO:0007669"/>
    <property type="project" value="Ensembl"/>
</dbReference>
<dbReference type="GO" id="GO:0008047">
    <property type="term" value="F:enzyme activator activity"/>
    <property type="evidence" value="ECO:0000314"/>
    <property type="project" value="BHF-UCL"/>
</dbReference>
<dbReference type="GO" id="GO:0019899">
    <property type="term" value="F:enzyme binding"/>
    <property type="evidence" value="ECO:0007669"/>
    <property type="project" value="Ensembl"/>
</dbReference>
<dbReference type="GO" id="GO:0050660">
    <property type="term" value="F:flavin adenine dinucleotide binding"/>
    <property type="evidence" value="ECO:0000318"/>
    <property type="project" value="GO_Central"/>
</dbReference>
<dbReference type="GO" id="GO:0010181">
    <property type="term" value="F:FMN binding"/>
    <property type="evidence" value="ECO:0000318"/>
    <property type="project" value="GO_Central"/>
</dbReference>
<dbReference type="GO" id="GO:0016787">
    <property type="term" value="F:hydrolase activity"/>
    <property type="evidence" value="ECO:0007669"/>
    <property type="project" value="Ensembl"/>
</dbReference>
<dbReference type="GO" id="GO:0047726">
    <property type="term" value="F:iron-cytochrome-c reductase activity"/>
    <property type="evidence" value="ECO:0007669"/>
    <property type="project" value="Ensembl"/>
</dbReference>
<dbReference type="GO" id="GO:0050661">
    <property type="term" value="F:NADP binding"/>
    <property type="evidence" value="ECO:0007669"/>
    <property type="project" value="UniProtKB-UniRule"/>
</dbReference>
<dbReference type="GO" id="GO:0003958">
    <property type="term" value="F:NADPH-hemoprotein reductase activity"/>
    <property type="evidence" value="ECO:0000314"/>
    <property type="project" value="UniProtKB"/>
</dbReference>
<dbReference type="GO" id="GO:0008941">
    <property type="term" value="F:nitric oxide dioxygenase NAD(P)H activity"/>
    <property type="evidence" value="ECO:0007669"/>
    <property type="project" value="Ensembl"/>
</dbReference>
<dbReference type="GO" id="GO:0009437">
    <property type="term" value="P:carnitine metabolic process"/>
    <property type="evidence" value="ECO:0007669"/>
    <property type="project" value="Ensembl"/>
</dbReference>
<dbReference type="GO" id="GO:0071372">
    <property type="term" value="P:cellular response to follicle-stimulating hormone stimulus"/>
    <property type="evidence" value="ECO:0007669"/>
    <property type="project" value="Ensembl"/>
</dbReference>
<dbReference type="GO" id="GO:0071375">
    <property type="term" value="P:cellular response to peptide hormone stimulus"/>
    <property type="evidence" value="ECO:0007669"/>
    <property type="project" value="Ensembl"/>
</dbReference>
<dbReference type="GO" id="GO:0070988">
    <property type="term" value="P:demethylation"/>
    <property type="evidence" value="ECO:0007669"/>
    <property type="project" value="Ensembl"/>
</dbReference>
<dbReference type="GO" id="GO:0022900">
    <property type="term" value="P:electron transport chain"/>
    <property type="evidence" value="ECO:0000314"/>
    <property type="project" value="UniProtKB"/>
</dbReference>
<dbReference type="GO" id="GO:0019395">
    <property type="term" value="P:fatty acid oxidation"/>
    <property type="evidence" value="ECO:0007669"/>
    <property type="project" value="Ensembl"/>
</dbReference>
<dbReference type="GO" id="GO:0009812">
    <property type="term" value="P:flavonoid metabolic process"/>
    <property type="evidence" value="ECO:0007669"/>
    <property type="project" value="Ensembl"/>
</dbReference>
<dbReference type="GO" id="GO:0043066">
    <property type="term" value="P:negative regulation of apoptotic process"/>
    <property type="evidence" value="ECO:0007669"/>
    <property type="project" value="Ensembl"/>
</dbReference>
<dbReference type="GO" id="GO:0043602">
    <property type="term" value="P:nitrate catabolic process"/>
    <property type="evidence" value="ECO:0007669"/>
    <property type="project" value="Ensembl"/>
</dbReference>
<dbReference type="GO" id="GO:0006809">
    <property type="term" value="P:nitric oxide biosynthetic process"/>
    <property type="evidence" value="ECO:0000318"/>
    <property type="project" value="GO_Central"/>
</dbReference>
<dbReference type="GO" id="GO:0046210">
    <property type="term" value="P:nitric oxide catabolic process"/>
    <property type="evidence" value="ECO:0007669"/>
    <property type="project" value="Ensembl"/>
</dbReference>
<dbReference type="GO" id="GO:0090346">
    <property type="term" value="P:organofluorine metabolic process"/>
    <property type="evidence" value="ECO:0000314"/>
    <property type="project" value="BHF-UCL"/>
</dbReference>
<dbReference type="GO" id="GO:0032332">
    <property type="term" value="P:positive regulation of chondrocyte differentiation"/>
    <property type="evidence" value="ECO:0007669"/>
    <property type="project" value="Ensembl"/>
</dbReference>
<dbReference type="GO" id="GO:0061913">
    <property type="term" value="P:positive regulation of growth plate cartilage chondrocyte proliferation"/>
    <property type="evidence" value="ECO:0007669"/>
    <property type="project" value="Ensembl"/>
</dbReference>
<dbReference type="GO" id="GO:0045880">
    <property type="term" value="P:positive regulation of smoothened signaling pathway"/>
    <property type="evidence" value="ECO:0007669"/>
    <property type="project" value="Ensembl"/>
</dbReference>
<dbReference type="GO" id="GO:0090031">
    <property type="term" value="P:positive regulation of steroid hormone biosynthetic process"/>
    <property type="evidence" value="ECO:0007669"/>
    <property type="project" value="Ensembl"/>
</dbReference>
<dbReference type="GO" id="GO:0071548">
    <property type="term" value="P:response to dexamethasone"/>
    <property type="evidence" value="ECO:0007669"/>
    <property type="project" value="Ensembl"/>
</dbReference>
<dbReference type="GO" id="GO:0009725">
    <property type="term" value="P:response to hormone"/>
    <property type="evidence" value="ECO:0000318"/>
    <property type="project" value="GO_Central"/>
</dbReference>
<dbReference type="GO" id="GO:0007584">
    <property type="term" value="P:response to nutrient"/>
    <property type="evidence" value="ECO:0007669"/>
    <property type="project" value="Ensembl"/>
</dbReference>
<dbReference type="GO" id="GO:0006805">
    <property type="term" value="P:xenobiotic metabolic process"/>
    <property type="evidence" value="ECO:0000304"/>
    <property type="project" value="Reactome"/>
</dbReference>
<dbReference type="CDD" id="cd06204">
    <property type="entry name" value="CYPOR"/>
    <property type="match status" value="1"/>
</dbReference>
<dbReference type="FunFam" id="1.20.990.10:FF:000001">
    <property type="entry name" value="NADPH--cytochrome P450 reductase"/>
    <property type="match status" value="1"/>
</dbReference>
<dbReference type="FunFam" id="3.40.50.360:FF:000009">
    <property type="entry name" value="NADPH--cytochrome P450 reductase"/>
    <property type="match status" value="1"/>
</dbReference>
<dbReference type="FunFam" id="3.40.50.80:FF:000001">
    <property type="entry name" value="NADPH--cytochrome P450 reductase 1"/>
    <property type="match status" value="1"/>
</dbReference>
<dbReference type="Gene3D" id="3.40.50.360">
    <property type="match status" value="1"/>
</dbReference>
<dbReference type="Gene3D" id="1.20.990.10">
    <property type="entry name" value="NADPH-cytochrome p450 Reductase, Chain A, domain 3"/>
    <property type="match status" value="1"/>
</dbReference>
<dbReference type="Gene3D" id="3.40.50.80">
    <property type="entry name" value="Nucleotide-binding domain of ferredoxin-NADP reductase (FNR) module"/>
    <property type="match status" value="1"/>
</dbReference>
<dbReference type="Gene3D" id="2.40.30.10">
    <property type="entry name" value="Translation factors"/>
    <property type="match status" value="1"/>
</dbReference>
<dbReference type="HAMAP" id="MF_03212">
    <property type="entry name" value="NCPR"/>
    <property type="match status" value="1"/>
</dbReference>
<dbReference type="InterPro" id="IPR003097">
    <property type="entry name" value="CysJ-like_FAD-binding"/>
</dbReference>
<dbReference type="InterPro" id="IPR017927">
    <property type="entry name" value="FAD-bd_FR_type"/>
</dbReference>
<dbReference type="InterPro" id="IPR001094">
    <property type="entry name" value="Flavdoxin-like"/>
</dbReference>
<dbReference type="InterPro" id="IPR008254">
    <property type="entry name" value="Flavodoxin/NO_synth"/>
</dbReference>
<dbReference type="InterPro" id="IPR001709">
    <property type="entry name" value="Flavoprot_Pyr_Nucl_cyt_Rdtase"/>
</dbReference>
<dbReference type="InterPro" id="IPR029039">
    <property type="entry name" value="Flavoprotein-like_sf"/>
</dbReference>
<dbReference type="InterPro" id="IPR039261">
    <property type="entry name" value="FNR_nucleotide-bd"/>
</dbReference>
<dbReference type="InterPro" id="IPR023173">
    <property type="entry name" value="NADPH_Cyt_P450_Rdtase_alpha"/>
</dbReference>
<dbReference type="InterPro" id="IPR001433">
    <property type="entry name" value="OxRdtase_FAD/NAD-bd"/>
</dbReference>
<dbReference type="InterPro" id="IPR023208">
    <property type="entry name" value="P450R"/>
</dbReference>
<dbReference type="InterPro" id="IPR017938">
    <property type="entry name" value="Riboflavin_synthase-like_b-brl"/>
</dbReference>
<dbReference type="PANTHER" id="PTHR19384:SF17">
    <property type="entry name" value="NADPH--CYTOCHROME P450 REDUCTASE"/>
    <property type="match status" value="1"/>
</dbReference>
<dbReference type="PANTHER" id="PTHR19384">
    <property type="entry name" value="NITRIC OXIDE SYNTHASE-RELATED"/>
    <property type="match status" value="1"/>
</dbReference>
<dbReference type="Pfam" id="PF00667">
    <property type="entry name" value="FAD_binding_1"/>
    <property type="match status" value="1"/>
</dbReference>
<dbReference type="Pfam" id="PF00258">
    <property type="entry name" value="Flavodoxin_1"/>
    <property type="match status" value="1"/>
</dbReference>
<dbReference type="Pfam" id="PF00175">
    <property type="entry name" value="NAD_binding_1"/>
    <property type="match status" value="1"/>
</dbReference>
<dbReference type="PIRSF" id="PIRSF000208">
    <property type="entry name" value="P450R"/>
    <property type="match status" value="1"/>
</dbReference>
<dbReference type="PRINTS" id="PR00369">
    <property type="entry name" value="FLAVODOXIN"/>
</dbReference>
<dbReference type="PRINTS" id="PR00371">
    <property type="entry name" value="FPNCR"/>
</dbReference>
<dbReference type="SUPFAM" id="SSF52343">
    <property type="entry name" value="Ferredoxin reductase-like, C-terminal NADP-linked domain"/>
    <property type="match status" value="1"/>
</dbReference>
<dbReference type="SUPFAM" id="SSF52218">
    <property type="entry name" value="Flavoproteins"/>
    <property type="match status" value="1"/>
</dbReference>
<dbReference type="SUPFAM" id="SSF63380">
    <property type="entry name" value="Riboflavin synthase domain-like"/>
    <property type="match status" value="1"/>
</dbReference>
<dbReference type="PROSITE" id="PS51384">
    <property type="entry name" value="FAD_FR"/>
    <property type="match status" value="1"/>
</dbReference>
<dbReference type="PROSITE" id="PS50902">
    <property type="entry name" value="FLAVODOXIN_LIKE"/>
    <property type="match status" value="1"/>
</dbReference>
<organism>
    <name type="scientific">Homo sapiens</name>
    <name type="common">Human</name>
    <dbReference type="NCBI Taxonomy" id="9606"/>
    <lineage>
        <taxon>Eukaryota</taxon>
        <taxon>Metazoa</taxon>
        <taxon>Chordata</taxon>
        <taxon>Craniata</taxon>
        <taxon>Vertebrata</taxon>
        <taxon>Euteleostomi</taxon>
        <taxon>Mammalia</taxon>
        <taxon>Eutheria</taxon>
        <taxon>Euarchontoglires</taxon>
        <taxon>Primates</taxon>
        <taxon>Haplorrhini</taxon>
        <taxon>Catarrhini</taxon>
        <taxon>Hominidae</taxon>
        <taxon>Homo</taxon>
    </lineage>
</organism>
<proteinExistence type="evidence at protein level"/>
<keyword id="KW-0002">3D-structure</keyword>
<keyword id="KW-0007">Acetylation</keyword>
<keyword id="KW-0954">Congenital adrenal hyperplasia</keyword>
<keyword id="KW-0989">Craniosynostosis</keyword>
<keyword id="KW-0903">Direct protein sequencing</keyword>
<keyword id="KW-0225">Disease variant</keyword>
<keyword id="KW-0256">Endoplasmic reticulum</keyword>
<keyword id="KW-0274">FAD</keyword>
<keyword id="KW-0285">Flavoprotein</keyword>
<keyword id="KW-0288">FMN</keyword>
<keyword id="KW-0472">Membrane</keyword>
<keyword id="KW-0521">NADP</keyword>
<keyword id="KW-0560">Oxidoreductase</keyword>
<keyword id="KW-0597">Phosphoprotein</keyword>
<keyword id="KW-1267">Proteomics identification</keyword>
<keyword id="KW-1185">Reference proteome</keyword>
<keyword id="KW-0812">Transmembrane</keyword>
<keyword id="KW-1133">Transmembrane helix</keyword>
<name>NCPR_HUMAN</name>
<protein>
    <recommendedName>
        <fullName evidence="1">NADPH--cytochrome P450 reductase</fullName>
        <shortName evidence="1">CPR</shortName>
        <shortName evidence="1">P450R</shortName>
        <ecNumber evidence="1">1.6.2.4</ecNumber>
    </recommendedName>
</protein>